<organismHost>
    <name type="scientific">Homo sapiens</name>
    <name type="common">Human</name>
    <dbReference type="NCBI Taxonomy" id="9606"/>
</organismHost>
<organism>
    <name type="scientific">KI polyomavirus (isolate Stockholm 60)</name>
    <name type="common">KIPyV</name>
    <dbReference type="NCBI Taxonomy" id="423446"/>
    <lineage>
        <taxon>Viruses</taxon>
        <taxon>Monodnaviria</taxon>
        <taxon>Shotokuvirae</taxon>
        <taxon>Cossaviricota</taxon>
        <taxon>Papovaviricetes</taxon>
        <taxon>Sepolyvirales</taxon>
        <taxon>Polyomaviridae</taxon>
        <taxon>Betapolyomavirus</taxon>
        <taxon>Betapolyomavirus tertihominis</taxon>
    </lineage>
</organism>
<accession>P0DOI3</accession>
<accession>A3R4M8</accession>
<accession>A3R4N3</accession>
<accession>A3R4N8</accession>
<evidence type="ECO:0000250" key="1">
    <source>
        <dbReference type="UniProtKB" id="P03087"/>
    </source>
</evidence>
<evidence type="ECO:0000256" key="2">
    <source>
        <dbReference type="SAM" id="MobiDB-lite"/>
    </source>
</evidence>
<evidence type="ECO:0000305" key="3"/>
<evidence type="ECO:0000305" key="4">
    <source>
    </source>
</evidence>
<evidence type="ECO:0007744" key="5">
    <source>
        <dbReference type="PDB" id="3S7V"/>
    </source>
</evidence>
<evidence type="ECO:0007829" key="6">
    <source>
        <dbReference type="PDB" id="3S7V"/>
    </source>
</evidence>
<protein>
    <recommendedName>
        <fullName>Major capsid protein VP1</fullName>
    </recommendedName>
    <alternativeName>
        <fullName>Major structural protein VP1</fullName>
    </alternativeName>
</protein>
<dbReference type="EMBL" id="EF127906">
    <property type="protein sequence ID" value="ABN09917.1"/>
    <property type="molecule type" value="Genomic_DNA"/>
</dbReference>
<dbReference type="PDB" id="3S7V">
    <property type="method" value="X-ray"/>
    <property type="resolution" value="2.55 A"/>
    <property type="chains" value="A/B/C/D/E/F/G/H/I/J=32-304"/>
</dbReference>
<dbReference type="PDBsum" id="3S7V"/>
<dbReference type="SMR" id="P0DOI3"/>
<dbReference type="UniLectin" id="P0DOI3"/>
<dbReference type="KEGG" id="vg:5076886"/>
<dbReference type="Proteomes" id="UP000107189">
    <property type="component" value="Genome"/>
</dbReference>
<dbReference type="GO" id="GO:0042025">
    <property type="term" value="C:host cell nucleus"/>
    <property type="evidence" value="ECO:0007669"/>
    <property type="project" value="UniProtKB-SubCell"/>
</dbReference>
<dbReference type="GO" id="GO:0039620">
    <property type="term" value="C:T=7 icosahedral viral capsid"/>
    <property type="evidence" value="ECO:0007669"/>
    <property type="project" value="UniProtKB-KW"/>
</dbReference>
<dbReference type="GO" id="GO:0005198">
    <property type="term" value="F:structural molecule activity"/>
    <property type="evidence" value="ECO:0007669"/>
    <property type="project" value="InterPro"/>
</dbReference>
<dbReference type="GO" id="GO:0075509">
    <property type="term" value="P:endocytosis involved in viral entry into host cell"/>
    <property type="evidence" value="ECO:0007669"/>
    <property type="project" value="UniProtKB-KW"/>
</dbReference>
<dbReference type="GO" id="GO:0019062">
    <property type="term" value="P:virion attachment to host cell"/>
    <property type="evidence" value="ECO:0007669"/>
    <property type="project" value="UniProtKB-KW"/>
</dbReference>
<dbReference type="Gene3D" id="2.60.175.10">
    <property type="entry name" value="Capsid protein VP1,Polyomavirus"/>
    <property type="match status" value="1"/>
</dbReference>
<dbReference type="InterPro" id="IPR000662">
    <property type="entry name" value="Capsid_VP1_Polyomavir"/>
</dbReference>
<dbReference type="InterPro" id="IPR011222">
    <property type="entry name" value="dsDNA_vir_gr_I_capsid"/>
</dbReference>
<dbReference type="InterPro" id="IPR036931">
    <property type="entry name" value="Polyomavir_VP1_sf"/>
</dbReference>
<dbReference type="Pfam" id="PF00718">
    <property type="entry name" value="Polyoma_coat"/>
    <property type="match status" value="1"/>
</dbReference>
<dbReference type="SUPFAM" id="SSF88648">
    <property type="entry name" value="Group I dsDNA viruses"/>
    <property type="match status" value="1"/>
</dbReference>
<feature type="chain" id="PRO_0000442710" description="Major capsid protein VP1">
    <location>
        <begin position="1"/>
        <end position="378"/>
    </location>
</feature>
<feature type="region of interest" description="Disordered" evidence="2">
    <location>
        <begin position="1"/>
        <end position="21"/>
    </location>
</feature>
<feature type="strand" evidence="6">
    <location>
        <begin position="36"/>
        <end position="39"/>
    </location>
</feature>
<feature type="strand" evidence="6">
    <location>
        <begin position="48"/>
        <end position="54"/>
    </location>
</feature>
<feature type="turn" evidence="6">
    <location>
        <begin position="92"/>
        <end position="94"/>
    </location>
</feature>
<feature type="helix" evidence="6">
    <location>
        <begin position="98"/>
        <end position="100"/>
    </location>
</feature>
<feature type="strand" evidence="6">
    <location>
        <begin position="105"/>
        <end position="109"/>
    </location>
</feature>
<feature type="strand" evidence="6">
    <location>
        <begin position="124"/>
        <end position="136"/>
    </location>
</feature>
<feature type="helix" evidence="6">
    <location>
        <begin position="142"/>
        <end position="144"/>
    </location>
</feature>
<feature type="strand" evidence="6">
    <location>
        <begin position="158"/>
        <end position="167"/>
    </location>
</feature>
<feature type="strand" evidence="6">
    <location>
        <begin position="170"/>
        <end position="173"/>
    </location>
</feature>
<feature type="strand" evidence="6">
    <location>
        <begin position="184"/>
        <end position="187"/>
    </location>
</feature>
<feature type="helix" evidence="6">
    <location>
        <begin position="194"/>
        <end position="196"/>
    </location>
</feature>
<feature type="strand" evidence="6">
    <location>
        <begin position="197"/>
        <end position="199"/>
    </location>
</feature>
<feature type="strand" evidence="6">
    <location>
        <begin position="206"/>
        <end position="208"/>
    </location>
</feature>
<feature type="turn" evidence="6">
    <location>
        <begin position="216"/>
        <end position="218"/>
    </location>
</feature>
<feature type="strand" evidence="6">
    <location>
        <begin position="219"/>
        <end position="221"/>
    </location>
</feature>
<feature type="strand" evidence="6">
    <location>
        <begin position="228"/>
        <end position="236"/>
    </location>
</feature>
<feature type="strand" evidence="6">
    <location>
        <begin position="244"/>
        <end position="250"/>
    </location>
</feature>
<feature type="strand" evidence="6">
    <location>
        <begin position="270"/>
        <end position="277"/>
    </location>
</feature>
<feature type="strand" evidence="6">
    <location>
        <begin position="279"/>
        <end position="281"/>
    </location>
</feature>
<feature type="strand" evidence="6">
    <location>
        <begin position="284"/>
        <end position="286"/>
    </location>
</feature>
<feature type="strand" evidence="6">
    <location>
        <begin position="289"/>
        <end position="302"/>
    </location>
</feature>
<reference key="1">
    <citation type="journal article" date="2007" name="J. Virol.">
        <title>Identification of a third human polyomavirus.</title>
        <authorList>
            <person name="Allander T."/>
            <person name="Andreasson K."/>
            <person name="Gupta S."/>
            <person name="Bjerkner A."/>
            <person name="Bogdanovic G."/>
            <person name="Persson M.A."/>
            <person name="Dalianis T."/>
            <person name="Ramqvist T."/>
            <person name="Andersson B."/>
        </authorList>
    </citation>
    <scope>NUCLEOTIDE SEQUENCE [GENOMIC DNA]</scope>
</reference>
<reference key="2">
    <citation type="journal article" date="2009" name="Virology">
        <title>The Polyomaviridae: Contributions of virus structure to our understanding of virus receptors and infectious entry.</title>
        <authorList>
            <person name="Neu U."/>
            <person name="Stehle T."/>
            <person name="Atwood W.J."/>
        </authorList>
    </citation>
    <scope>REVIEW</scope>
</reference>
<reference evidence="5" key="3">
    <citation type="journal article" date="2011" name="J. Virol.">
        <title>Structures of the major capsid proteins of the human Karolinska Institutet and Washington University polyomaviruses.</title>
        <authorList>
            <person name="Neu U."/>
            <person name="Wang J."/>
            <person name="Macejak D."/>
            <person name="Garcea R.L."/>
            <person name="Stehle T."/>
        </authorList>
    </citation>
    <scope>X-RAY CRYSTALLOGRAPHY (2.55 ANGSTROMS) OF 32-304</scope>
</reference>
<comment type="function">
    <text evidence="1 4">Forms an icosahedral capsid with a T=7 symmetry and a 40 nm diameter. The capsid is composed of 72 pentamers linked to each other by disulfide bonds and associated with VP2 or VP3 proteins. Interacts with sialic acids on the cell surface to provide virion attachment to target cell. Once attached, the virion is internalized by endocytosis and traffics to the endoplasmic reticulum. Inside the endoplasmic reticulum, the protein folding machinery isomerizes VP1 interpentamer disulfide bonds, thereby triggering initial uncoating. Next, the virion uses the endoplasmic reticulum-associated degradation machinery to probably translocate in the cytosol before reaching the nucleus. Nuclear entry of the viral DNA involves the selective exposure and importin recognition of VP2/Vp3 nuclear localization signal. In late phase of infection, neo-synthesized VP1 encapsulates replicated genomic DNA in the nucleus, and participates in rearranging nucleosomes around the viral DNA.</text>
</comment>
<comment type="subunit">
    <text evidence="1">Homomultimer. The virus capsid is composed of 72 icosahedral units, each one composed of five disulfide-linked copies of VP1. Interacts with minor capsid proteins VP2 and VP3.</text>
</comment>
<comment type="subcellular location">
    <subcellularLocation>
        <location evidence="1">Virion</location>
    </subcellularLocation>
    <subcellularLocation>
        <location evidence="1">Host nucleus</location>
    </subcellularLocation>
</comment>
<comment type="alternative products">
    <event type="alternative splicing"/>
    <event type="alternative initiation"/>
    <isoform>
        <id>P0DOI3-1</id>
        <id>A3R4N3-1</id>
        <name>VP1</name>
        <sequence type="displayed"/>
    </isoform>
    <isoform>
        <id>P0DOJ2-1</id>
        <id>A3R4N1-1</id>
        <name>VP2</name>
        <name>Minor capsid protein VP2</name>
        <sequence type="external"/>
    </isoform>
    <isoform>
        <id>P0DOJ2-2</id>
        <id>A3R4N1-2</id>
        <name>VP3</name>
        <name>Minor capsid protein VP3</name>
        <sequence type="external"/>
    </isoform>
</comment>
<comment type="miscellaneous">
    <molecule>Isoform VP1</molecule>
    <text>Produced by alternative splicing of the late mRNA.</text>
</comment>
<comment type="similarity">
    <text evidence="3">Belongs to the polyomaviruses coat protein VP1 family.</text>
</comment>
<name>VP1_POVK6</name>
<keyword id="KW-0002">3D-structure</keyword>
<keyword id="KW-0024">Alternative initiation</keyword>
<keyword id="KW-0025">Alternative splicing</keyword>
<keyword id="KW-0167">Capsid protein</keyword>
<keyword id="KW-1015">Disulfide bond</keyword>
<keyword id="KW-1048">Host nucleus</keyword>
<keyword id="KW-0945">Host-virus interaction</keyword>
<keyword id="KW-0426">Late protein</keyword>
<keyword id="KW-1145">T=7 icosahedral capsid protein</keyword>
<keyword id="KW-1161">Viral attachment to host cell</keyword>
<keyword id="KW-1162">Viral penetration into host cytoplasm</keyword>
<keyword id="KW-0946">Virion</keyword>
<keyword id="KW-1164">Virus endocytosis by host</keyword>
<keyword id="KW-1160">Virus entry into host cell</keyword>
<proteinExistence type="evidence at protein level"/>
<sequence>MSCTPCRPQKRLTRPRSQVPRVQTLATEVKKGGVEVLAAVPLSEETEFKVELFVKPVIGNTTAAQDGREPTPHYWSISSAIHDKESGSSIKVEETPDADTTVCYSLAEIAPPDIPNQVSECDMKVWELYRMETELLVVPLVNALGNTNGVVHGLAGTQLYFWAVGGQPLDVVGVTPTDKYKGPTTYTINPPGDPRTLHVYNSNTPKAKVTSERYSVESWAPDPSRNDNCRYFGRVVGGAATPPVVSYGNNSTIPLLDENGIGILCLQGRLYITCADMLGTANSRIHTPMARFFRLHFRQRRVKNPFTMNVLYKQVFNRPTETVDAQVGVTEVTMVEEIGPLPPSIQTTLPTSVNLTQLPRTVTLQSQAPLLNTQQNSK</sequence>